<accession>Q5XDA6</accession>
<dbReference type="EC" id="3.1.26.3" evidence="1"/>
<dbReference type="EMBL" id="CP000003">
    <property type="protein sequence ID" value="AAT86607.1"/>
    <property type="molecule type" value="Genomic_DNA"/>
</dbReference>
<dbReference type="RefSeq" id="WP_002985639.1">
    <property type="nucleotide sequence ID" value="NC_006086.1"/>
</dbReference>
<dbReference type="SMR" id="Q5XDA6"/>
<dbReference type="GeneID" id="69901246"/>
<dbReference type="KEGG" id="spa:M6_Spy0472"/>
<dbReference type="HOGENOM" id="CLU_000907_1_3_9"/>
<dbReference type="Proteomes" id="UP000001167">
    <property type="component" value="Chromosome"/>
</dbReference>
<dbReference type="GO" id="GO:0005737">
    <property type="term" value="C:cytoplasm"/>
    <property type="evidence" value="ECO:0007669"/>
    <property type="project" value="UniProtKB-SubCell"/>
</dbReference>
<dbReference type="GO" id="GO:0003725">
    <property type="term" value="F:double-stranded RNA binding"/>
    <property type="evidence" value="ECO:0007669"/>
    <property type="project" value="TreeGrafter"/>
</dbReference>
<dbReference type="GO" id="GO:0046872">
    <property type="term" value="F:metal ion binding"/>
    <property type="evidence" value="ECO:0007669"/>
    <property type="project" value="UniProtKB-KW"/>
</dbReference>
<dbReference type="GO" id="GO:0004525">
    <property type="term" value="F:ribonuclease III activity"/>
    <property type="evidence" value="ECO:0007669"/>
    <property type="project" value="UniProtKB-UniRule"/>
</dbReference>
<dbReference type="GO" id="GO:0019843">
    <property type="term" value="F:rRNA binding"/>
    <property type="evidence" value="ECO:0007669"/>
    <property type="project" value="UniProtKB-KW"/>
</dbReference>
<dbReference type="GO" id="GO:0006397">
    <property type="term" value="P:mRNA processing"/>
    <property type="evidence" value="ECO:0007669"/>
    <property type="project" value="UniProtKB-UniRule"/>
</dbReference>
<dbReference type="GO" id="GO:0010468">
    <property type="term" value="P:regulation of gene expression"/>
    <property type="evidence" value="ECO:0007669"/>
    <property type="project" value="TreeGrafter"/>
</dbReference>
<dbReference type="GO" id="GO:0006364">
    <property type="term" value="P:rRNA processing"/>
    <property type="evidence" value="ECO:0007669"/>
    <property type="project" value="UniProtKB-UniRule"/>
</dbReference>
<dbReference type="GO" id="GO:0008033">
    <property type="term" value="P:tRNA processing"/>
    <property type="evidence" value="ECO:0007669"/>
    <property type="project" value="UniProtKB-KW"/>
</dbReference>
<dbReference type="CDD" id="cd10845">
    <property type="entry name" value="DSRM_RNAse_III_family"/>
    <property type="match status" value="1"/>
</dbReference>
<dbReference type="CDD" id="cd00593">
    <property type="entry name" value="RIBOc"/>
    <property type="match status" value="1"/>
</dbReference>
<dbReference type="FunFam" id="1.10.1520.10:FF:000001">
    <property type="entry name" value="Ribonuclease 3"/>
    <property type="match status" value="1"/>
</dbReference>
<dbReference type="FunFam" id="3.30.160.20:FF:000003">
    <property type="entry name" value="Ribonuclease 3"/>
    <property type="match status" value="1"/>
</dbReference>
<dbReference type="Gene3D" id="3.30.160.20">
    <property type="match status" value="1"/>
</dbReference>
<dbReference type="Gene3D" id="1.10.1520.10">
    <property type="entry name" value="Ribonuclease III domain"/>
    <property type="match status" value="1"/>
</dbReference>
<dbReference type="HAMAP" id="MF_00104">
    <property type="entry name" value="RNase_III"/>
    <property type="match status" value="1"/>
</dbReference>
<dbReference type="InterPro" id="IPR014720">
    <property type="entry name" value="dsRBD_dom"/>
</dbReference>
<dbReference type="InterPro" id="IPR011907">
    <property type="entry name" value="RNase_III"/>
</dbReference>
<dbReference type="InterPro" id="IPR000999">
    <property type="entry name" value="RNase_III_dom"/>
</dbReference>
<dbReference type="InterPro" id="IPR036389">
    <property type="entry name" value="RNase_III_sf"/>
</dbReference>
<dbReference type="NCBIfam" id="TIGR02191">
    <property type="entry name" value="RNaseIII"/>
    <property type="match status" value="1"/>
</dbReference>
<dbReference type="PANTHER" id="PTHR11207:SF0">
    <property type="entry name" value="RIBONUCLEASE 3"/>
    <property type="match status" value="1"/>
</dbReference>
<dbReference type="PANTHER" id="PTHR11207">
    <property type="entry name" value="RIBONUCLEASE III"/>
    <property type="match status" value="1"/>
</dbReference>
<dbReference type="Pfam" id="PF00035">
    <property type="entry name" value="dsrm"/>
    <property type="match status" value="1"/>
</dbReference>
<dbReference type="Pfam" id="PF14622">
    <property type="entry name" value="Ribonucleas_3_3"/>
    <property type="match status" value="1"/>
</dbReference>
<dbReference type="SMART" id="SM00358">
    <property type="entry name" value="DSRM"/>
    <property type="match status" value="1"/>
</dbReference>
<dbReference type="SMART" id="SM00535">
    <property type="entry name" value="RIBOc"/>
    <property type="match status" value="1"/>
</dbReference>
<dbReference type="SUPFAM" id="SSF54768">
    <property type="entry name" value="dsRNA-binding domain-like"/>
    <property type="match status" value="1"/>
</dbReference>
<dbReference type="SUPFAM" id="SSF69065">
    <property type="entry name" value="RNase III domain-like"/>
    <property type="match status" value="1"/>
</dbReference>
<dbReference type="PROSITE" id="PS50137">
    <property type="entry name" value="DS_RBD"/>
    <property type="match status" value="1"/>
</dbReference>
<dbReference type="PROSITE" id="PS00517">
    <property type="entry name" value="RNASE_3_1"/>
    <property type="match status" value="1"/>
</dbReference>
<dbReference type="PROSITE" id="PS50142">
    <property type="entry name" value="RNASE_3_2"/>
    <property type="match status" value="1"/>
</dbReference>
<gene>
    <name evidence="1" type="primary">rnc</name>
    <name type="ordered locus">M6_Spy0472</name>
</gene>
<comment type="function">
    <text evidence="1">Digests double-stranded RNA. Involved in the processing of primary rRNA transcript to yield the immediate precursors to the large and small rRNAs (23S and 16S). Processes some mRNAs, and tRNAs when they are encoded in the rRNA operon. Processes pre-crRNA and tracrRNA of type II CRISPR loci if present in the organism.</text>
</comment>
<comment type="catalytic activity">
    <reaction evidence="1">
        <text>Endonucleolytic cleavage to 5'-phosphomonoester.</text>
        <dbReference type="EC" id="3.1.26.3"/>
    </reaction>
</comment>
<comment type="cofactor">
    <cofactor evidence="1">
        <name>Mg(2+)</name>
        <dbReference type="ChEBI" id="CHEBI:18420"/>
    </cofactor>
</comment>
<comment type="subunit">
    <text evidence="1">Homodimer.</text>
</comment>
<comment type="subcellular location">
    <subcellularLocation>
        <location evidence="1">Cytoplasm</location>
    </subcellularLocation>
</comment>
<comment type="similarity">
    <text evidence="1">Belongs to the ribonuclease III family.</text>
</comment>
<reference key="1">
    <citation type="journal article" date="2004" name="J. Infect. Dis.">
        <title>Progress toward characterization of the group A Streptococcus metagenome: complete genome sequence of a macrolide-resistant serotype M6 strain.</title>
        <authorList>
            <person name="Banks D.J."/>
            <person name="Porcella S.F."/>
            <person name="Barbian K.D."/>
            <person name="Beres S.B."/>
            <person name="Philips L.E."/>
            <person name="Voyich J.M."/>
            <person name="DeLeo F.R."/>
            <person name="Martin J.M."/>
            <person name="Somerville G.A."/>
            <person name="Musser J.M."/>
        </authorList>
    </citation>
    <scope>NUCLEOTIDE SEQUENCE [LARGE SCALE GENOMIC DNA]</scope>
    <source>
        <strain>ATCC BAA-946 / MGAS10394</strain>
    </source>
</reference>
<organism>
    <name type="scientific">Streptococcus pyogenes serotype M6 (strain ATCC BAA-946 / MGAS10394)</name>
    <dbReference type="NCBI Taxonomy" id="286636"/>
    <lineage>
        <taxon>Bacteria</taxon>
        <taxon>Bacillati</taxon>
        <taxon>Bacillota</taxon>
        <taxon>Bacilli</taxon>
        <taxon>Lactobacillales</taxon>
        <taxon>Streptococcaceae</taxon>
        <taxon>Streptococcus</taxon>
    </lineage>
</organism>
<proteinExistence type="inferred from homology"/>
<feature type="chain" id="PRO_0000180445" description="Ribonuclease 3">
    <location>
        <begin position="1"/>
        <end position="230"/>
    </location>
</feature>
<feature type="domain" description="RNase III" evidence="1">
    <location>
        <begin position="1"/>
        <end position="134"/>
    </location>
</feature>
<feature type="domain" description="DRBM" evidence="1">
    <location>
        <begin position="160"/>
        <end position="229"/>
    </location>
</feature>
<feature type="active site" evidence="1">
    <location>
        <position position="51"/>
    </location>
</feature>
<feature type="active site" evidence="1">
    <location>
        <position position="123"/>
    </location>
</feature>
<feature type="binding site" evidence="1">
    <location>
        <position position="47"/>
    </location>
    <ligand>
        <name>Mg(2+)</name>
        <dbReference type="ChEBI" id="CHEBI:18420"/>
    </ligand>
</feature>
<feature type="binding site" evidence="1">
    <location>
        <position position="120"/>
    </location>
    <ligand>
        <name>Mg(2+)</name>
        <dbReference type="ChEBI" id="CHEBI:18420"/>
    </ligand>
</feature>
<feature type="binding site" evidence="1">
    <location>
        <position position="123"/>
    </location>
    <ligand>
        <name>Mg(2+)</name>
        <dbReference type="ChEBI" id="CHEBI:18420"/>
    </ligand>
</feature>
<evidence type="ECO:0000255" key="1">
    <source>
        <dbReference type="HAMAP-Rule" id="MF_00104"/>
    </source>
</evidence>
<sequence length="230" mass="25876">MKQLEELLSTSFDIQFNDLTLLETAFTHTSYANEHRLLNVSHNERLEFLGDAVLQLIISEYLFAKYPKKTEGDMSKLRSMIVREESLAGFSRFCSFDAYIKLGKGEEKSGGRRRDTILGDLFEAFLGALLLDKGIDAVRRFLKQVMIPQVEKGNFERVKDYKTCLQEFLQTKGDVVIDYQVISEKGPAHAKQFEVSIVVNGAVLSKGLGKSKKLAEQDAAKNALAQLSEV</sequence>
<name>RNC_STRP6</name>
<protein>
    <recommendedName>
        <fullName evidence="1">Ribonuclease 3</fullName>
        <ecNumber evidence="1">3.1.26.3</ecNumber>
    </recommendedName>
    <alternativeName>
        <fullName evidence="1">Ribonuclease III</fullName>
        <shortName evidence="1">RNase III</shortName>
    </alternativeName>
</protein>
<keyword id="KW-0963">Cytoplasm</keyword>
<keyword id="KW-0255">Endonuclease</keyword>
<keyword id="KW-0378">Hydrolase</keyword>
<keyword id="KW-0460">Magnesium</keyword>
<keyword id="KW-0479">Metal-binding</keyword>
<keyword id="KW-0507">mRNA processing</keyword>
<keyword id="KW-0540">Nuclease</keyword>
<keyword id="KW-0694">RNA-binding</keyword>
<keyword id="KW-0698">rRNA processing</keyword>
<keyword id="KW-0699">rRNA-binding</keyword>
<keyword id="KW-0819">tRNA processing</keyword>